<sequence length="3206" mass="352698">MSATPAPIAIIGVGCRLPGGASDLDKLWKLLSEGRSGRTEIPADRWAAEEWFDAYPDAKESIVTKHGFFLKEDISQFDAKFFGISNTEAHAMDPQQRLFLMTTFEALEDAAIRVETLRGSNTGVFASIFERSYDRMGHKDLATISNTHMNGTGEATVLSNRISYCFDLKGPCMTIDTGCSGSLVALHQACQSLRLGESDLALVGGSQLVIHPDALSIMSGMGMLNPDGKSYAFDSRGQGYGRGEGVATIVLKRLDQALEDGDRIHAVIANSGVNQDGKTSGLNTPSGDAQAALASRVYREAGLNPADTSFVEAHGTGTQVGDREEIASISKVFCDDVARTDDLYVGSIKPNVGHLEATSGIAGLLKCILVLKHGQIPQNLDFIKPKPSLKLYERKIKIPTELTKLPTTRSGGPVRVSLNSFGYGGTNCHVILEAADSGRQPTGTNGIKTNGTRINGIKTNGADTNERESMKNGLSDGYQASLLDNATSHRPELIVLSASTEEALSSRAQDLLLWIKSRQVAPQTLHSLAYTLGVHRSALPYRRAIVAPTTEELVAELKVQGPAKRTASQAPVTFVFSGQGAQWHAMGLELIHFSHVFQQSMSAMEDALRRQGCPWSLVEELSKSPEHSRVGEAEIAQPATTAIQIALVDLLDSFSIRPSRVVGHSSGEIAAAYAAGALSRESAILVAYQRGVSSAKAKKMADVPGAMMAVSLDETEAMRYLKKLTQGAAVVACVNSPSSQTLSGDETAIDEIKEALDKDGIFARKLRVDTAYHSHHMQRVAEDYQEAISSIQSSGVRDGVTFYSSVTGAIKSAGFGADYWTSNLVSQVKFSQALTLLRKDQIKQDANMDMGVFVEIGPHSALAGPSRQTLGHEGAKKYKFEYLSALQRNTDALQSTLALGGRLFELGLKVDMTAVLTVADKTKPEIIRDLPLYPWDLAPFWRESRLSKARRFRQFPHHDLLGLFDPASTIHEPRWRYLINLDSLPWLRGHVVEGFTLYPGAGYLTMAIEATKQLVQMRGLQKPIAKFMLRNVAISKSIVLNEPDESSSGEVEVQLSMSAANEYEGSRWESFRIRSYNTADASWSEHCSGEITVEYETDEPDEVEGTREGELRQEEAMQFLATCQQSCDTDMTKSEFYDFAGRTGNEFSGAFTPIVSASYGKNRGVCEICTPDIAPLMPYRSFRPHVIHPITLDATQQINAVLFKKFITNAACVPTKIPLLEISASLFTTPGNSLTGAMQIEADGPKASNCEGWVFQKDEDGHVSPVIRLLVNLRAIGETREDEDRPFVQDAVNRLDWNLDADFMTQTSFRQVLSSTLGLEENTTHGFDGTKVSIQESDREYLETDQASSIWFRDAVRYVEENNAGMVTPQQVQFLGWMKRWLSSDYCRQITSGLTPEDEKRILQNVESSETSAQLQLLARVGKALPRILTGEIQPLDVMLEGNLLSRYYESGILVGPYEAVVEYLKILTFKNPRLHVLEAGAGTGGCTKWLFRGLSGQNGAVGLPVEKYTFTDVSSGFFEDARQTFAQWEDIMEFRTLDVDADPIEQGFEPGSYDVVVAANVLHATRKIDVTISRVRKLLKPGGSLVLVEIEPRGAAFGLVAGGLTGWWASEDDFRVEGPLLFRSQWQDVLARNGFGGIHVSWECMMVAKAEPAPSTNGTHARHSVVLIRDGGDDHVVKTAAKEFASRGIDIIDCPWEQVTAQEESVYVILDRAEKRLLLDPQPELFGIVNALVSAKCRLLWVLLQDTADYAASAYKGLVNAFIRVLRRESSNTGLVTLDIRQPALHPEVIAQVIADVARRRFWAATEDTLSSEPEFAYEDCRILIPRVKPDADFLQWARRRTWPAAADETETVPYQGDRVLKAEVATPGLLSSLRFVDDDMSACVGPSQIEIKAEAHGVNYKDVLLALGQRGSGAHMAGEFVGVVTAVGEDMRDLHQVGDRVMGFGSQPFSNQSRVHGHLARKTPDWMAATVAASIPHAYVTAYHCIMGIARLERGQSILIQAASGGVGQAAIQLAQHIGAVVFCTVSTSAKQNLIIDEYGIPESHIFSSQQTGSLKRGIMRLTNGKGVDLVLNSSAGEALRDSLDCVRSLGTFIELGKTEMQQASQLSMAAFNRSITFHAFDLETLSARDPRRVHRTLGDIISLLESKALRPIQPITIYPIDEIEDAFRFLASRKHTGKVVLQVEPTSMVKCLPAKPQPLRVRKDGTYVAAGGLGDLTSRICVFLASRGAGHVVSLSRRAIDDETKQKYMAAVREHGGELHILQCDITDEESMQRAAAYCSKLPPVRGVVNGALVLRDRTFAQMSIEEWKLPLQPKVFGTLNLDKYFASPDLAFFLTLSSVVAVVGKAGQSNYAAGNGFQDAFALAHANHPHTHYISVNVGAVSVDAHGALKEATQGDMSIGGMRASLRQNSVMDISFDEFFADIEYAMSGLARDHHRHQTIQGVTHQSMLDANDEHLLENPVFSQLTHSQRRQATGATQTDKIDLKKALGGVETMEEAEQLIRDATLTKFAVFLDRPIEDIRVDQSLATIGLDSLVSIELKNWMVRTFQVNLQTSELGGAGSIVALAATVASRSKLIPDKIRHSSRLQEATTQAENKDAPKNEKEGPSHNFYCCRASKDLPRHPLVDLDEAIHDLLNSIGHFAHTQEEYAELRRKAHALTAPGSLGRRLYSQLRAKADDPSVESWIAGPLLKALHLKRRYPLVPFSSFLGTHFDSAVPHSQAQRAAALTRALCEFKHDLDNRKLKPDFLGERPNCGHSLTWLFNALREPNVGCDKMVRYPGVEHVAVLRRGHLFRVPLREGNDIVSYQKLKATYQAILNLDLEEKLWTGILTTDNRDSWATNRQTLLALDERNTAYIKTLEESVVVMCLDDNSPVTREERVRFGYLGDSFNRWHDKTIQLVVTANGRSGTIFEHSMIDFMTTSQISQRLQAAIDTLDPENDNHGQDVEAVVDPASLKEIALVATTTEIEARMIMLRDKYAATTGRKIYTPHLIPSFGKAVLLAHAVPIKATVDLTIQLASRLYFGYLPASWETVSTAHFHLGRPEIVQVVLKSVVDFCDAALDSSVPRAEARVQLLRAAREMNAQIVKGGEGRNYFRLMDVLEVMSHEAVDEGAADAVPELFADPVWQRSYPRLIMQTMIERKLAQDPGYTMEDPENVWMNYTVNEDSLEVCYVSPRTGAERFKAALDRATDIIKTIIQAGQE</sequence>
<proteinExistence type="evidence at protein level"/>
<reference key="1">
    <citation type="journal article" date="2024" name="Chem. Sci.">
        <title>Discovery and heterologous biosynthesis of glycosylated polyketide luteodienoside A reveals unprecedented glucinol-mediated product offloading by a fungal carnitine O-acyltransferase domain.</title>
        <authorList>
            <person name="Arishi A.A."/>
            <person name="Shang Z."/>
            <person name="Lacey E."/>
            <person name="Crombie A."/>
            <person name="Vuong D."/>
            <person name="Li H."/>
            <person name="Bracegirdle J."/>
            <person name="Turner P."/>
            <person name="Lewis W."/>
            <person name="Flematti G.R."/>
            <person name="Piggott A.M."/>
            <person name="Chooi Y.H."/>
        </authorList>
    </citation>
    <scope>NUCLEOTIDE SEQUENCE [GENOMIC DNA]</scope>
    <scope>FUNCTION</scope>
    <scope>CATALYTIC ACTIVITY</scope>
    <scope>PATHWAY</scope>
    <source>
        <strain>CBS 146723 / FRR 5427 / MST FP 2246</strain>
    </source>
</reference>
<dbReference type="EC" id="2.3.1.-" evidence="6"/>
<dbReference type="EMBL" id="OR597289">
    <property type="protein sequence ID" value="WWQ80773.1"/>
    <property type="molecule type" value="Genomic_DNA"/>
</dbReference>
<dbReference type="SMR" id="P9WEH6"/>
<dbReference type="GO" id="GO:0004312">
    <property type="term" value="F:fatty acid synthase activity"/>
    <property type="evidence" value="ECO:0007669"/>
    <property type="project" value="TreeGrafter"/>
</dbReference>
<dbReference type="GO" id="GO:0008168">
    <property type="term" value="F:methyltransferase activity"/>
    <property type="evidence" value="ECO:0007669"/>
    <property type="project" value="UniProtKB-KW"/>
</dbReference>
<dbReference type="GO" id="GO:0016491">
    <property type="term" value="F:oxidoreductase activity"/>
    <property type="evidence" value="ECO:0007669"/>
    <property type="project" value="UniProtKB-KW"/>
</dbReference>
<dbReference type="GO" id="GO:0031177">
    <property type="term" value="F:phosphopantetheine binding"/>
    <property type="evidence" value="ECO:0007669"/>
    <property type="project" value="InterPro"/>
</dbReference>
<dbReference type="GO" id="GO:0006633">
    <property type="term" value="P:fatty acid biosynthetic process"/>
    <property type="evidence" value="ECO:0007669"/>
    <property type="project" value="TreeGrafter"/>
</dbReference>
<dbReference type="GO" id="GO:0032259">
    <property type="term" value="P:methylation"/>
    <property type="evidence" value="ECO:0007669"/>
    <property type="project" value="UniProtKB-KW"/>
</dbReference>
<dbReference type="GO" id="GO:0044550">
    <property type="term" value="P:secondary metabolite biosynthetic process"/>
    <property type="evidence" value="ECO:0007669"/>
    <property type="project" value="TreeGrafter"/>
</dbReference>
<dbReference type="CDD" id="cd02440">
    <property type="entry name" value="AdoMet_MTases"/>
    <property type="match status" value="1"/>
</dbReference>
<dbReference type="CDD" id="cd05195">
    <property type="entry name" value="enoyl_red"/>
    <property type="match status" value="1"/>
</dbReference>
<dbReference type="CDD" id="cd00833">
    <property type="entry name" value="PKS"/>
    <property type="match status" value="1"/>
</dbReference>
<dbReference type="Gene3D" id="3.30.70.3290">
    <property type="match status" value="1"/>
</dbReference>
<dbReference type="Gene3D" id="3.40.47.10">
    <property type="match status" value="1"/>
</dbReference>
<dbReference type="Gene3D" id="1.10.1200.10">
    <property type="entry name" value="ACP-like"/>
    <property type="match status" value="1"/>
</dbReference>
<dbReference type="Gene3D" id="3.30.559.10">
    <property type="entry name" value="Chloramphenicol acetyltransferase-like domain"/>
    <property type="match status" value="1"/>
</dbReference>
<dbReference type="Gene3D" id="1.10.275.20">
    <property type="entry name" value="Choline/Carnitine o-acyltransferase"/>
    <property type="match status" value="1"/>
</dbReference>
<dbReference type="Gene3D" id="3.30.559.70">
    <property type="entry name" value="Choline/Carnitine o-acyltransferase, domain 2"/>
    <property type="match status" value="1"/>
</dbReference>
<dbReference type="Gene3D" id="3.40.366.10">
    <property type="entry name" value="Malonyl-Coenzyme A Acyl Carrier Protein, domain 2"/>
    <property type="match status" value="1"/>
</dbReference>
<dbReference type="Gene3D" id="3.90.180.10">
    <property type="entry name" value="Medium-chain alcohol dehydrogenases, catalytic domain"/>
    <property type="match status" value="1"/>
</dbReference>
<dbReference type="Gene3D" id="3.40.50.720">
    <property type="entry name" value="NAD(P)-binding Rossmann-like Domain"/>
    <property type="match status" value="1"/>
</dbReference>
<dbReference type="Gene3D" id="3.10.129.110">
    <property type="entry name" value="Polyketide synthase dehydratase"/>
    <property type="match status" value="1"/>
</dbReference>
<dbReference type="Gene3D" id="3.40.50.150">
    <property type="entry name" value="Vaccinia Virus protein VP39"/>
    <property type="match status" value="1"/>
</dbReference>
<dbReference type="InterPro" id="IPR001227">
    <property type="entry name" value="Ac_transferase_dom_sf"/>
</dbReference>
<dbReference type="InterPro" id="IPR036736">
    <property type="entry name" value="ACP-like_sf"/>
</dbReference>
<dbReference type="InterPro" id="IPR014043">
    <property type="entry name" value="Acyl_transferase_dom"/>
</dbReference>
<dbReference type="InterPro" id="IPR016035">
    <property type="entry name" value="Acyl_Trfase/lysoPLipase"/>
</dbReference>
<dbReference type="InterPro" id="IPR042572">
    <property type="entry name" value="Carn_acyl_trans_N"/>
</dbReference>
<dbReference type="InterPro" id="IPR023213">
    <property type="entry name" value="CAT-like_dom_sf"/>
</dbReference>
<dbReference type="InterPro" id="IPR039551">
    <property type="entry name" value="Cho/carn_acyl_trans"/>
</dbReference>
<dbReference type="InterPro" id="IPR042231">
    <property type="entry name" value="Cho/carn_acyl_trans_2"/>
</dbReference>
<dbReference type="InterPro" id="IPR011032">
    <property type="entry name" value="GroES-like_sf"/>
</dbReference>
<dbReference type="InterPro" id="IPR014031">
    <property type="entry name" value="Ketoacyl_synth_C"/>
</dbReference>
<dbReference type="InterPro" id="IPR014030">
    <property type="entry name" value="Ketoacyl_synth_N"/>
</dbReference>
<dbReference type="InterPro" id="IPR016036">
    <property type="entry name" value="Malonyl_transacylase_ACP-bd"/>
</dbReference>
<dbReference type="InterPro" id="IPR013217">
    <property type="entry name" value="Methyltransf_12"/>
</dbReference>
<dbReference type="InterPro" id="IPR036291">
    <property type="entry name" value="NAD(P)-bd_dom_sf"/>
</dbReference>
<dbReference type="InterPro" id="IPR032821">
    <property type="entry name" value="PKS_assoc"/>
</dbReference>
<dbReference type="InterPro" id="IPR020841">
    <property type="entry name" value="PKS_Beta-ketoAc_synthase_dom"/>
</dbReference>
<dbReference type="InterPro" id="IPR042104">
    <property type="entry name" value="PKS_dehydratase_sf"/>
</dbReference>
<dbReference type="InterPro" id="IPR020807">
    <property type="entry name" value="PKS_DH"/>
</dbReference>
<dbReference type="InterPro" id="IPR049551">
    <property type="entry name" value="PKS_DH_C"/>
</dbReference>
<dbReference type="InterPro" id="IPR049552">
    <property type="entry name" value="PKS_DH_N"/>
</dbReference>
<dbReference type="InterPro" id="IPR020843">
    <property type="entry name" value="PKS_ER"/>
</dbReference>
<dbReference type="InterPro" id="IPR013968">
    <property type="entry name" value="PKS_KR"/>
</dbReference>
<dbReference type="InterPro" id="IPR049900">
    <property type="entry name" value="PKS_mFAS_DH"/>
</dbReference>
<dbReference type="InterPro" id="IPR050091">
    <property type="entry name" value="PKS_NRPS_Biosynth_Enz"/>
</dbReference>
<dbReference type="InterPro" id="IPR020806">
    <property type="entry name" value="PKS_PP-bd"/>
</dbReference>
<dbReference type="InterPro" id="IPR009081">
    <property type="entry name" value="PP-bd_ACP"/>
</dbReference>
<dbReference type="InterPro" id="IPR029063">
    <property type="entry name" value="SAM-dependent_MTases_sf"/>
</dbReference>
<dbReference type="InterPro" id="IPR016039">
    <property type="entry name" value="Thiolase-like"/>
</dbReference>
<dbReference type="PANTHER" id="PTHR43775">
    <property type="entry name" value="FATTY ACID SYNTHASE"/>
    <property type="match status" value="1"/>
</dbReference>
<dbReference type="PANTHER" id="PTHR43775:SF22">
    <property type="entry name" value="SYNTHASE, PUTATIVE (JCVI)-RELATED"/>
    <property type="match status" value="1"/>
</dbReference>
<dbReference type="Pfam" id="PF23297">
    <property type="entry name" value="ACP_SdgA_C"/>
    <property type="match status" value="1"/>
</dbReference>
<dbReference type="Pfam" id="PF00698">
    <property type="entry name" value="Acyl_transf_1"/>
    <property type="match status" value="1"/>
</dbReference>
<dbReference type="Pfam" id="PF13602">
    <property type="entry name" value="ADH_zinc_N_2"/>
    <property type="match status" value="1"/>
</dbReference>
<dbReference type="Pfam" id="PF00755">
    <property type="entry name" value="Carn_acyltransf"/>
    <property type="match status" value="1"/>
</dbReference>
<dbReference type="Pfam" id="PF16197">
    <property type="entry name" value="KAsynt_C_assoc"/>
    <property type="match status" value="1"/>
</dbReference>
<dbReference type="Pfam" id="PF00109">
    <property type="entry name" value="ketoacyl-synt"/>
    <property type="match status" value="1"/>
</dbReference>
<dbReference type="Pfam" id="PF02801">
    <property type="entry name" value="Ketoacyl-synt_C"/>
    <property type="match status" value="1"/>
</dbReference>
<dbReference type="Pfam" id="PF08659">
    <property type="entry name" value="KR"/>
    <property type="match status" value="1"/>
</dbReference>
<dbReference type="Pfam" id="PF08242">
    <property type="entry name" value="Methyltransf_12"/>
    <property type="match status" value="1"/>
</dbReference>
<dbReference type="Pfam" id="PF21089">
    <property type="entry name" value="PKS_DH_N"/>
    <property type="match status" value="1"/>
</dbReference>
<dbReference type="Pfam" id="PF14765">
    <property type="entry name" value="PS-DH"/>
    <property type="match status" value="1"/>
</dbReference>
<dbReference type="SMART" id="SM00827">
    <property type="entry name" value="PKS_AT"/>
    <property type="match status" value="1"/>
</dbReference>
<dbReference type="SMART" id="SM00826">
    <property type="entry name" value="PKS_DH"/>
    <property type="match status" value="1"/>
</dbReference>
<dbReference type="SMART" id="SM00829">
    <property type="entry name" value="PKS_ER"/>
    <property type="match status" value="1"/>
</dbReference>
<dbReference type="SMART" id="SM00822">
    <property type="entry name" value="PKS_KR"/>
    <property type="match status" value="1"/>
</dbReference>
<dbReference type="SMART" id="SM00825">
    <property type="entry name" value="PKS_KS"/>
    <property type="match status" value="1"/>
</dbReference>
<dbReference type="SMART" id="SM00823">
    <property type="entry name" value="PKS_PP"/>
    <property type="match status" value="1"/>
</dbReference>
<dbReference type="SUPFAM" id="SSF47336">
    <property type="entry name" value="ACP-like"/>
    <property type="match status" value="1"/>
</dbReference>
<dbReference type="SUPFAM" id="SSF52777">
    <property type="entry name" value="CoA-dependent acyltransferases"/>
    <property type="match status" value="2"/>
</dbReference>
<dbReference type="SUPFAM" id="SSF52151">
    <property type="entry name" value="FabD/lysophospholipase-like"/>
    <property type="match status" value="1"/>
</dbReference>
<dbReference type="SUPFAM" id="SSF50129">
    <property type="entry name" value="GroES-like"/>
    <property type="match status" value="1"/>
</dbReference>
<dbReference type="SUPFAM" id="SSF51735">
    <property type="entry name" value="NAD(P)-binding Rossmann-fold domains"/>
    <property type="match status" value="2"/>
</dbReference>
<dbReference type="SUPFAM" id="SSF55048">
    <property type="entry name" value="Probable ACP-binding domain of malonyl-CoA ACP transacylase"/>
    <property type="match status" value="1"/>
</dbReference>
<dbReference type="SUPFAM" id="SSF53335">
    <property type="entry name" value="S-adenosyl-L-methionine-dependent methyltransferases"/>
    <property type="match status" value="1"/>
</dbReference>
<dbReference type="SUPFAM" id="SSF53901">
    <property type="entry name" value="Thiolase-like"/>
    <property type="match status" value="1"/>
</dbReference>
<dbReference type="PROSITE" id="PS50075">
    <property type="entry name" value="CARRIER"/>
    <property type="match status" value="1"/>
</dbReference>
<dbReference type="PROSITE" id="PS52004">
    <property type="entry name" value="KS3_2"/>
    <property type="match status" value="1"/>
</dbReference>
<dbReference type="PROSITE" id="PS52019">
    <property type="entry name" value="PKS_MFAS_DH"/>
    <property type="match status" value="1"/>
</dbReference>
<accession>P9WEH6</accession>
<name>LTBA_ASPLT</name>
<protein>
    <recommendedName>
        <fullName evidence="7">Highly reducing polyketide synthase ltbA</fullName>
        <shortName evidence="7">HR-PKS ltbA</shortName>
        <ecNumber evidence="6">2.3.1.-</ecNumber>
    </recommendedName>
    <alternativeName>
        <fullName evidence="7">Luteodienoside A biosynthesis cluster protein A</fullName>
    </alternativeName>
</protein>
<organism>
    <name type="scientific">Aspergillus luteorubrus</name>
    <dbReference type="NCBI Taxonomy" id="2715282"/>
    <lineage>
        <taxon>Eukaryota</taxon>
        <taxon>Fungi</taxon>
        <taxon>Dikarya</taxon>
        <taxon>Ascomycota</taxon>
        <taxon>Pezizomycotina</taxon>
        <taxon>Eurotiomycetes</taxon>
        <taxon>Eurotiomycetidae</taxon>
        <taxon>Eurotiales</taxon>
        <taxon>Aspergillaceae</taxon>
        <taxon>Aspergillus</taxon>
    </lineage>
</organism>
<evidence type="ECO:0000255" key="1"/>
<evidence type="ECO:0000255" key="2">
    <source>
        <dbReference type="PROSITE-ProRule" id="PRU00258"/>
    </source>
</evidence>
<evidence type="ECO:0000255" key="3">
    <source>
        <dbReference type="PROSITE-ProRule" id="PRU01348"/>
    </source>
</evidence>
<evidence type="ECO:0000255" key="4">
    <source>
        <dbReference type="PROSITE-ProRule" id="PRU01363"/>
    </source>
</evidence>
<evidence type="ECO:0000256" key="5">
    <source>
        <dbReference type="SAM" id="MobiDB-lite"/>
    </source>
</evidence>
<evidence type="ECO:0000269" key="6">
    <source>
    </source>
</evidence>
<evidence type="ECO:0000303" key="7">
    <source>
    </source>
</evidence>
<gene>
    <name evidence="7" type="primary">ltbA</name>
</gene>
<comment type="function">
    <text evidence="6">Highly reducing polyketide synthase; part of the gene cluster that mediates the biosynthesis of luteodienoside A, a glycosylated polyketide consisting of an unusual 1-O-beta-D-glucopyranosyl-myo-inositol (glucinol) ester of 3-hydroxy-2,2,4-trimethylocta-4,6-dienoic acid (PubMed:38425541). LtbA produces the trimethylated polyketide chain from acetyl-CoA, malonyl-CoA and S-adenosylmethionine (SAM). The ltbA carnitine O-acyltransferase (cAT) domain then uses glucinol produced by the glycosyltransferase ltbB as an offloading substrate to release luteodienoside A. Furthermore, the PKS C-methyltransferase (CMeT) domain is capable of catalysing gem-dimethylation of the 3-hydroxy-2,2,4-trimethylocta-4,6-dienoic acid intermediate, without requiring reversible product release and recapture by the cAT domain (PubMed:38425541). Since ltbA and ltbB are sufficient for the biosynthesis of luteodienoside A, the functions of the methyltransferase ltbC and the FAD-binding monooxygenase ltbD within the pathway remain obscur (PubMed:38425541).</text>
</comment>
<comment type="cofactor">
    <cofactor evidence="2">
        <name>pantetheine 4'-phosphate</name>
        <dbReference type="ChEBI" id="CHEBI:47942"/>
    </cofactor>
</comment>
<comment type="pathway">
    <text evidence="6">Secondary metabolite biosynthesis.</text>
</comment>
<comment type="domain">
    <text evidence="6">Multidomain protein; including a ketosynthase (KS) that catalyzes repeated decarboxylative condensation to elongate the polyketide backbone; a malonyl-CoA:ACP transacylase (MAT) that selects and transfers the extender unit malonyl-CoA; a dehydratase (DH) domain that reduces hydroxyl groups to enoyl groups; a methyltransferase (CMeT) domain responsible for the incorporation of methyl groups; an enoylreductase (ER) domain that reduces enoyl groups to alkyl group; a ketoreductase (KR) domain that catalyzes beta-ketoreduction steps; and an acyl-carrier protein (ACP) that serves as the tether of the growing and completed polyketide via its phosphopantetheinyl arm, and a C-terminal carnitine O-acyltransferase (cAT) domain that uses glucinol as an offloading substrate to release the product.</text>
</comment>
<feature type="chain" id="PRO_0000461478" description="Highly reducing polyketide synthase ltbA">
    <location>
        <begin position="1"/>
        <end position="3206"/>
    </location>
</feature>
<feature type="domain" description="Ketosynthase family 3 (KS3)" evidence="3">
    <location>
        <begin position="5"/>
        <end position="434"/>
    </location>
</feature>
<feature type="domain" description="PKS/mFAS DH" evidence="4">
    <location>
        <begin position="958"/>
        <end position="1284"/>
    </location>
</feature>
<feature type="domain" description="Carrier" evidence="2">
    <location>
        <begin position="2499"/>
        <end position="2577"/>
    </location>
</feature>
<feature type="region of interest" description="Disordered" evidence="5">
    <location>
        <begin position="441"/>
        <end position="472"/>
    </location>
</feature>
<feature type="region of interest" description="Malonyl-CoA:ACP transacylase (MAT) domain" evidence="1">
    <location>
        <begin position="575"/>
        <end position="890"/>
    </location>
</feature>
<feature type="region of interest" description="Dehydratase (DH) domain" evidence="1">
    <location>
        <begin position="958"/>
        <end position="1278"/>
    </location>
</feature>
<feature type="region of interest" description="N-terminal hotdog fold" evidence="4">
    <location>
        <begin position="958"/>
        <end position="1098"/>
    </location>
</feature>
<feature type="region of interest" description="C-terminal hotdog fold" evidence="4">
    <location>
        <begin position="1128"/>
        <end position="1284"/>
    </location>
</feature>
<feature type="region of interest" description="Methyltransferase (CMet) domain" evidence="1">
    <location>
        <begin position="1450"/>
        <end position="1640"/>
    </location>
</feature>
<feature type="region of interest" description="Enoyl reductase (ER) domain" evidence="1">
    <location>
        <begin position="1871"/>
        <end position="2185"/>
    </location>
</feature>
<feature type="region of interest" description="Ketoreductase (KR) domain" evidence="1">
    <location>
        <begin position="2208"/>
        <end position="2395"/>
    </location>
</feature>
<feature type="region of interest" description="Disordered" evidence="5">
    <location>
        <begin position="2584"/>
        <end position="2611"/>
    </location>
</feature>
<feature type="region of interest" description="Carnitine O-acyltransferase (cAT) domain" evidence="6">
    <location>
        <begin position="2994"/>
        <end position="3206"/>
    </location>
</feature>
<feature type="compositionally biased region" description="Polar residues" evidence="5">
    <location>
        <begin position="441"/>
        <end position="463"/>
    </location>
</feature>
<feature type="compositionally biased region" description="Basic and acidic residues" evidence="5">
    <location>
        <begin position="2598"/>
        <end position="2610"/>
    </location>
</feature>
<feature type="active site" description="For beta-ketoacyl synthase activity" evidence="3">
    <location>
        <position position="179"/>
    </location>
</feature>
<feature type="active site" description="For beta-ketoacyl synthase activity" evidence="3">
    <location>
        <position position="314"/>
    </location>
</feature>
<feature type="active site" description="For beta-ketoacyl synthase activity" evidence="3">
    <location>
        <position position="354"/>
    </location>
</feature>
<feature type="active site" description="Proton acceptor; for dehydratase activity" evidence="4">
    <location>
        <position position="990"/>
    </location>
</feature>
<feature type="active site" description="Proton donor; for dehydratase activity" evidence="4">
    <location>
        <position position="1193"/>
    </location>
</feature>
<feature type="modified residue" description="O-(pantetheine 4'-phosphoryl)serine" evidence="2">
    <location>
        <position position="2537"/>
    </location>
</feature>
<keyword id="KW-0012">Acyltransferase</keyword>
<keyword id="KW-0489">Methyltransferase</keyword>
<keyword id="KW-0511">Multifunctional enzyme</keyword>
<keyword id="KW-0521">NADP</keyword>
<keyword id="KW-0560">Oxidoreductase</keyword>
<keyword id="KW-0596">Phosphopantetheine</keyword>
<keyword id="KW-0597">Phosphoprotein</keyword>
<keyword id="KW-0808">Transferase</keyword>